<gene>
    <name evidence="1" type="primary">rsmB</name>
    <name evidence="1" type="synonym">sun</name>
    <name type="ordered locus">SG2248</name>
</gene>
<reference key="1">
    <citation type="journal article" date="2006" name="Genome Res.">
        <title>Massive genome erosion and functional adaptations provide insights into the symbiotic lifestyle of Sodalis glossinidius in the tsetse host.</title>
        <authorList>
            <person name="Toh H."/>
            <person name="Weiss B.L."/>
            <person name="Perkin S.A.H."/>
            <person name="Yamashita A."/>
            <person name="Oshima K."/>
            <person name="Hattori M."/>
            <person name="Aksoy S."/>
        </authorList>
    </citation>
    <scope>NUCLEOTIDE SEQUENCE [LARGE SCALE GENOMIC DNA]</scope>
    <source>
        <strain>morsitans</strain>
    </source>
</reference>
<comment type="function">
    <text evidence="1">Specifically methylates the cytosine at position 967 (m5C967) of 16S rRNA.</text>
</comment>
<comment type="catalytic activity">
    <reaction evidence="1">
        <text>cytidine(967) in 16S rRNA + S-adenosyl-L-methionine = 5-methylcytidine(967) in 16S rRNA + S-adenosyl-L-homocysteine + H(+)</text>
        <dbReference type="Rhea" id="RHEA:42748"/>
        <dbReference type="Rhea" id="RHEA-COMP:10219"/>
        <dbReference type="Rhea" id="RHEA-COMP:10220"/>
        <dbReference type="ChEBI" id="CHEBI:15378"/>
        <dbReference type="ChEBI" id="CHEBI:57856"/>
        <dbReference type="ChEBI" id="CHEBI:59789"/>
        <dbReference type="ChEBI" id="CHEBI:74483"/>
        <dbReference type="ChEBI" id="CHEBI:82748"/>
        <dbReference type="EC" id="2.1.1.176"/>
    </reaction>
</comment>
<comment type="subcellular location">
    <subcellularLocation>
        <location evidence="1">Cytoplasm</location>
    </subcellularLocation>
</comment>
<comment type="similarity">
    <text evidence="1">Belongs to the class I-like SAM-binding methyltransferase superfamily. RsmB/NOP family.</text>
</comment>
<sequence length="433" mass="47786">MKTHYNLRVIAARAVAQVLDQGQSLGALLPPLQAPLSEKDRALLQELCFGIMRVLPQLEWLLRQLMAKPLTGKQRPVHYLLMVGLYQLTYTRIPPHAALAETVEGAVAMKRPQFKGLINGVLRQFQRQQPALLADAERQDIRHLHPSWLQKRILAAWPAQYAQIIDANNQRPPMWLRVNRLHHSRDAYLALLAGTDIAAVAHSQLPDAIRLEMPCNVGRLPGFDRGWVTVQDASAQGCALLLAPQNSETILDLCAAPGGKTTHILEIAPAARVMAVDVDGQRAARIHDNLQRLGMQAEVVIGDGRTPDAWRSGMLFDRILLDAPCSATGVIRRHPDIKWLRRDGDIAELAELQRQILCAAWRVLKLGGTLLYATCSILPEENRGQIAAFLADHPDALLQETGDAAAPGLQCLPVPTSGDGFFYAKMIKETQAC</sequence>
<accession>Q2NQQ2</accession>
<organism>
    <name type="scientific">Sodalis glossinidius (strain morsitans)</name>
    <dbReference type="NCBI Taxonomy" id="343509"/>
    <lineage>
        <taxon>Bacteria</taxon>
        <taxon>Pseudomonadati</taxon>
        <taxon>Pseudomonadota</taxon>
        <taxon>Gammaproteobacteria</taxon>
        <taxon>Enterobacterales</taxon>
        <taxon>Bruguierivoracaceae</taxon>
        <taxon>Sodalis</taxon>
    </lineage>
</organism>
<protein>
    <recommendedName>
        <fullName evidence="1">Ribosomal RNA small subunit methyltransferase B</fullName>
        <ecNumber evidence="1">2.1.1.176</ecNumber>
    </recommendedName>
    <alternativeName>
        <fullName evidence="1">16S rRNA m5C967 methyltransferase</fullName>
    </alternativeName>
    <alternativeName>
        <fullName evidence="1">rRNA (cytosine-C(5)-)-methyltransferase RsmB</fullName>
    </alternativeName>
</protein>
<evidence type="ECO:0000255" key="1">
    <source>
        <dbReference type="HAMAP-Rule" id="MF_01856"/>
    </source>
</evidence>
<name>RSMB_SODGM</name>
<feature type="chain" id="PRO_0000366181" description="Ribosomal RNA small subunit methyltransferase B">
    <location>
        <begin position="1"/>
        <end position="433"/>
    </location>
</feature>
<feature type="active site" description="Nucleophile" evidence="1">
    <location>
        <position position="375"/>
    </location>
</feature>
<feature type="binding site" evidence="1">
    <location>
        <begin position="254"/>
        <end position="260"/>
    </location>
    <ligand>
        <name>S-adenosyl-L-methionine</name>
        <dbReference type="ChEBI" id="CHEBI:59789"/>
    </ligand>
</feature>
<feature type="binding site" evidence="1">
    <location>
        <position position="277"/>
    </location>
    <ligand>
        <name>S-adenosyl-L-methionine</name>
        <dbReference type="ChEBI" id="CHEBI:59789"/>
    </ligand>
</feature>
<feature type="binding site" evidence="1">
    <location>
        <position position="303"/>
    </location>
    <ligand>
        <name>S-adenosyl-L-methionine</name>
        <dbReference type="ChEBI" id="CHEBI:59789"/>
    </ligand>
</feature>
<feature type="binding site" evidence="1">
    <location>
        <position position="322"/>
    </location>
    <ligand>
        <name>S-adenosyl-L-methionine</name>
        <dbReference type="ChEBI" id="CHEBI:59789"/>
    </ligand>
</feature>
<proteinExistence type="inferred from homology"/>
<dbReference type="EC" id="2.1.1.176" evidence="1"/>
<dbReference type="EMBL" id="AP008232">
    <property type="protein sequence ID" value="BAE75523.1"/>
    <property type="molecule type" value="Genomic_DNA"/>
</dbReference>
<dbReference type="RefSeq" id="WP_011412059.1">
    <property type="nucleotide sequence ID" value="NC_007712.1"/>
</dbReference>
<dbReference type="SMR" id="Q2NQQ2"/>
<dbReference type="STRING" id="343509.SG2248"/>
<dbReference type="KEGG" id="sgl:SG2248"/>
<dbReference type="eggNOG" id="COG0144">
    <property type="taxonomic scope" value="Bacteria"/>
</dbReference>
<dbReference type="eggNOG" id="COG0781">
    <property type="taxonomic scope" value="Bacteria"/>
</dbReference>
<dbReference type="HOGENOM" id="CLU_005316_0_4_6"/>
<dbReference type="OrthoDB" id="9810297at2"/>
<dbReference type="BioCyc" id="SGLO343509:SGP1_RS20685-MONOMER"/>
<dbReference type="Proteomes" id="UP000001932">
    <property type="component" value="Chromosome"/>
</dbReference>
<dbReference type="GO" id="GO:0005829">
    <property type="term" value="C:cytosol"/>
    <property type="evidence" value="ECO:0007669"/>
    <property type="project" value="TreeGrafter"/>
</dbReference>
<dbReference type="GO" id="GO:0003723">
    <property type="term" value="F:RNA binding"/>
    <property type="evidence" value="ECO:0007669"/>
    <property type="project" value="UniProtKB-KW"/>
</dbReference>
<dbReference type="GO" id="GO:0009383">
    <property type="term" value="F:rRNA (cytosine-C5-)-methyltransferase activity"/>
    <property type="evidence" value="ECO:0007669"/>
    <property type="project" value="TreeGrafter"/>
</dbReference>
<dbReference type="GO" id="GO:0006355">
    <property type="term" value="P:regulation of DNA-templated transcription"/>
    <property type="evidence" value="ECO:0007669"/>
    <property type="project" value="InterPro"/>
</dbReference>
<dbReference type="GO" id="GO:0070475">
    <property type="term" value="P:rRNA base methylation"/>
    <property type="evidence" value="ECO:0007669"/>
    <property type="project" value="TreeGrafter"/>
</dbReference>
<dbReference type="CDD" id="cd02440">
    <property type="entry name" value="AdoMet_MTases"/>
    <property type="match status" value="1"/>
</dbReference>
<dbReference type="CDD" id="cd00620">
    <property type="entry name" value="Methyltransferase_Sun"/>
    <property type="match status" value="1"/>
</dbReference>
<dbReference type="FunFam" id="1.10.940.10:FF:000002">
    <property type="entry name" value="Ribosomal RNA small subunit methyltransferase B"/>
    <property type="match status" value="1"/>
</dbReference>
<dbReference type="FunFam" id="3.30.70.1170:FF:000002">
    <property type="entry name" value="Ribosomal RNA small subunit methyltransferase B"/>
    <property type="match status" value="1"/>
</dbReference>
<dbReference type="FunFam" id="3.40.50.150:FF:000022">
    <property type="entry name" value="Ribosomal RNA small subunit methyltransferase B"/>
    <property type="match status" value="1"/>
</dbReference>
<dbReference type="Gene3D" id="1.10.287.730">
    <property type="entry name" value="Helix hairpin bin"/>
    <property type="match status" value="1"/>
</dbReference>
<dbReference type="Gene3D" id="1.10.940.10">
    <property type="entry name" value="NusB-like"/>
    <property type="match status" value="1"/>
</dbReference>
<dbReference type="Gene3D" id="3.30.70.1170">
    <property type="entry name" value="Sun protein, domain 3"/>
    <property type="match status" value="1"/>
</dbReference>
<dbReference type="Gene3D" id="3.40.50.150">
    <property type="entry name" value="Vaccinia Virus protein VP39"/>
    <property type="match status" value="1"/>
</dbReference>
<dbReference type="HAMAP" id="MF_01856">
    <property type="entry name" value="16SrRNA_methyltr_B"/>
    <property type="match status" value="1"/>
</dbReference>
<dbReference type="InterPro" id="IPR049560">
    <property type="entry name" value="MeTrfase_RsmB-F_NOP2_cat"/>
</dbReference>
<dbReference type="InterPro" id="IPR001678">
    <property type="entry name" value="MeTrfase_RsmB-F_NOP2_dom"/>
</dbReference>
<dbReference type="InterPro" id="IPR035926">
    <property type="entry name" value="NusB-like_sf"/>
</dbReference>
<dbReference type="InterPro" id="IPR006027">
    <property type="entry name" value="NusB_RsmB_TIM44"/>
</dbReference>
<dbReference type="InterPro" id="IPR023267">
    <property type="entry name" value="RCMT"/>
</dbReference>
<dbReference type="InterPro" id="IPR004573">
    <property type="entry name" value="rRNA_ssu_MeTfrase_B"/>
</dbReference>
<dbReference type="InterPro" id="IPR023541">
    <property type="entry name" value="rRNA_ssu_MeTfrase_B_ent"/>
</dbReference>
<dbReference type="InterPro" id="IPR054728">
    <property type="entry name" value="RsmB-like_ferredoxin"/>
</dbReference>
<dbReference type="InterPro" id="IPR048019">
    <property type="entry name" value="RsmB-like_N"/>
</dbReference>
<dbReference type="InterPro" id="IPR018314">
    <property type="entry name" value="RsmB/NOL1/NOP2-like_CS"/>
</dbReference>
<dbReference type="InterPro" id="IPR029063">
    <property type="entry name" value="SAM-dependent_MTases_sf"/>
</dbReference>
<dbReference type="NCBIfam" id="NF008149">
    <property type="entry name" value="PRK10901.1"/>
    <property type="match status" value="1"/>
</dbReference>
<dbReference type="NCBIfam" id="TIGR00563">
    <property type="entry name" value="rsmB"/>
    <property type="match status" value="1"/>
</dbReference>
<dbReference type="PANTHER" id="PTHR22807:SF61">
    <property type="entry name" value="NOL1_NOP2_SUN FAMILY PROTEIN _ ANTITERMINATION NUSB DOMAIN-CONTAINING PROTEIN"/>
    <property type="match status" value="1"/>
</dbReference>
<dbReference type="PANTHER" id="PTHR22807">
    <property type="entry name" value="NOP2 YEAST -RELATED NOL1/NOP2/FMU SUN DOMAIN-CONTAINING"/>
    <property type="match status" value="1"/>
</dbReference>
<dbReference type="Pfam" id="PF01189">
    <property type="entry name" value="Methyltr_RsmB-F"/>
    <property type="match status" value="1"/>
</dbReference>
<dbReference type="Pfam" id="PF01029">
    <property type="entry name" value="NusB"/>
    <property type="match status" value="1"/>
</dbReference>
<dbReference type="Pfam" id="PF22458">
    <property type="entry name" value="RsmF-B_ferredox"/>
    <property type="match status" value="1"/>
</dbReference>
<dbReference type="PRINTS" id="PR02008">
    <property type="entry name" value="RCMTFAMILY"/>
</dbReference>
<dbReference type="SUPFAM" id="SSF48013">
    <property type="entry name" value="NusB-like"/>
    <property type="match status" value="1"/>
</dbReference>
<dbReference type="SUPFAM" id="SSF53335">
    <property type="entry name" value="S-adenosyl-L-methionine-dependent methyltransferases"/>
    <property type="match status" value="1"/>
</dbReference>
<dbReference type="PROSITE" id="PS01153">
    <property type="entry name" value="NOL1_NOP2_SUN"/>
    <property type="match status" value="1"/>
</dbReference>
<dbReference type="PROSITE" id="PS51686">
    <property type="entry name" value="SAM_MT_RSMB_NOP"/>
    <property type="match status" value="1"/>
</dbReference>
<keyword id="KW-0963">Cytoplasm</keyword>
<keyword id="KW-0489">Methyltransferase</keyword>
<keyword id="KW-0694">RNA-binding</keyword>
<keyword id="KW-0698">rRNA processing</keyword>
<keyword id="KW-0949">S-adenosyl-L-methionine</keyword>
<keyword id="KW-0808">Transferase</keyword>